<name>SETB2_HUMAN</name>
<feature type="chain" id="PRO_0000186088" description="Histone-lysine N-methyltransferase SETDB2">
    <location>
        <begin position="1"/>
        <end position="719"/>
    </location>
</feature>
<feature type="domain" description="MBD" evidence="4">
    <location>
        <begin position="157"/>
        <end position="229"/>
    </location>
</feature>
<feature type="domain" description="Pre-SET" evidence="2">
    <location>
        <begin position="291"/>
        <end position="364"/>
    </location>
</feature>
<feature type="domain" description="SET" evidence="3">
    <location>
        <begin position="367"/>
        <end position="694"/>
    </location>
</feature>
<feature type="region of interest" description="Disordered" evidence="5">
    <location>
        <begin position="72"/>
        <end position="102"/>
    </location>
</feature>
<feature type="region of interest" description="Disordered" evidence="5">
    <location>
        <begin position="508"/>
        <end position="547"/>
    </location>
</feature>
<feature type="compositionally biased region" description="Polar residues" evidence="5">
    <location>
        <begin position="72"/>
        <end position="82"/>
    </location>
</feature>
<feature type="compositionally biased region" description="Basic and acidic residues" evidence="5">
    <location>
        <begin position="520"/>
        <end position="530"/>
    </location>
</feature>
<feature type="compositionally biased region" description="Polar residues" evidence="5">
    <location>
        <begin position="532"/>
        <end position="543"/>
    </location>
</feature>
<feature type="binding site" evidence="1">
    <location>
        <position position="293"/>
    </location>
    <ligand>
        <name>Zn(2+)</name>
        <dbReference type="ChEBI" id="CHEBI:29105"/>
        <label>1</label>
    </ligand>
</feature>
<feature type="binding site" evidence="1">
    <location>
        <position position="293"/>
    </location>
    <ligand>
        <name>Zn(2+)</name>
        <dbReference type="ChEBI" id="CHEBI:29105"/>
        <label>2</label>
    </ligand>
</feature>
<feature type="binding site" evidence="1">
    <location>
        <position position="295"/>
    </location>
    <ligand>
        <name>Zn(2+)</name>
        <dbReference type="ChEBI" id="CHEBI:29105"/>
        <label>1</label>
    </ligand>
</feature>
<feature type="binding site" evidence="1">
    <location>
        <position position="299"/>
    </location>
    <ligand>
        <name>Zn(2+)</name>
        <dbReference type="ChEBI" id="CHEBI:29105"/>
        <label>1</label>
    </ligand>
</feature>
<feature type="binding site" evidence="1">
    <location>
        <position position="299"/>
    </location>
    <ligand>
        <name>Zn(2+)</name>
        <dbReference type="ChEBI" id="CHEBI:29105"/>
        <label>3</label>
    </ligand>
</feature>
<feature type="binding site" evidence="1">
    <location>
        <position position="305"/>
    </location>
    <ligand>
        <name>Zn(2+)</name>
        <dbReference type="ChEBI" id="CHEBI:29105"/>
        <label>1</label>
    </ligand>
</feature>
<feature type="binding site" evidence="1">
    <location>
        <position position="307"/>
    </location>
    <ligand>
        <name>Zn(2+)</name>
        <dbReference type="ChEBI" id="CHEBI:29105"/>
        <label>2</label>
    </ligand>
</feature>
<feature type="binding site" evidence="1">
    <location>
        <position position="345"/>
    </location>
    <ligand>
        <name>Zn(2+)</name>
        <dbReference type="ChEBI" id="CHEBI:29105"/>
        <label>2</label>
    </ligand>
</feature>
<feature type="binding site" evidence="1">
    <location>
        <position position="345"/>
    </location>
    <ligand>
        <name>Zn(2+)</name>
        <dbReference type="ChEBI" id="CHEBI:29105"/>
        <label>3</label>
    </ligand>
</feature>
<feature type="binding site" evidence="1">
    <location>
        <position position="349"/>
    </location>
    <ligand>
        <name>Zn(2+)</name>
        <dbReference type="ChEBI" id="CHEBI:29105"/>
        <label>2</label>
    </ligand>
</feature>
<feature type="binding site" evidence="1">
    <location>
        <position position="351"/>
    </location>
    <ligand>
        <name>Zn(2+)</name>
        <dbReference type="ChEBI" id="CHEBI:29105"/>
        <label>3</label>
    </ligand>
</feature>
<feature type="binding site" evidence="1">
    <location>
        <position position="356"/>
    </location>
    <ligand>
        <name>Zn(2+)</name>
        <dbReference type="ChEBI" id="CHEBI:29105"/>
        <label>3</label>
    </ligand>
</feature>
<feature type="binding site" evidence="1">
    <location>
        <begin position="377"/>
        <end position="379"/>
    </location>
    <ligand>
        <name>S-adenosyl-L-methionine</name>
        <dbReference type="ChEBI" id="CHEBI:59789"/>
    </ligand>
</feature>
<feature type="binding site" evidence="3">
    <location>
        <position position="418"/>
    </location>
    <ligand>
        <name>S-adenosyl-L-methionine</name>
        <dbReference type="ChEBI" id="CHEBI:59789"/>
    </ligand>
</feature>
<feature type="binding site" evidence="3">
    <location>
        <position position="648"/>
    </location>
    <ligand>
        <name>S-adenosyl-L-methionine</name>
        <dbReference type="ChEBI" id="CHEBI:59789"/>
    </ligand>
</feature>
<feature type="binding site" evidence="1">
    <location>
        <begin position="651"/>
        <end position="652"/>
    </location>
    <ligand>
        <name>S-adenosyl-L-methionine</name>
        <dbReference type="ChEBI" id="CHEBI:59789"/>
    </ligand>
</feature>
<feature type="binding site" evidence="1">
    <location>
        <position position="654"/>
    </location>
    <ligand>
        <name>Zn(2+)</name>
        <dbReference type="ChEBI" id="CHEBI:29105"/>
        <label>4</label>
    </ligand>
</feature>
<feature type="binding site" evidence="1">
    <location>
        <position position="707"/>
    </location>
    <ligand>
        <name>Zn(2+)</name>
        <dbReference type="ChEBI" id="CHEBI:29105"/>
        <label>4</label>
    </ligand>
</feature>
<feature type="binding site" evidence="1">
    <location>
        <position position="709"/>
    </location>
    <ligand>
        <name>Zn(2+)</name>
        <dbReference type="ChEBI" id="CHEBI:29105"/>
        <label>4</label>
    </ligand>
</feature>
<feature type="binding site" evidence="1">
    <location>
        <position position="714"/>
    </location>
    <ligand>
        <name>Zn(2+)</name>
        <dbReference type="ChEBI" id="CHEBI:29105"/>
        <label>4</label>
    </ligand>
</feature>
<feature type="splice variant" id="VSP_008413" description="In isoform 2." evidence="11">
    <location>
        <begin position="70"/>
        <end position="81"/>
    </location>
</feature>
<feature type="splice variant" id="VSP_024034" description="In isoform 3." evidence="12">
    <location>
        <position position="523"/>
    </location>
</feature>
<feature type="sequence variant" id="VAR_031282" description="In dbSNP:rs7998427." evidence="6 7">
    <original>E</original>
    <variation>G</variation>
    <location>
        <position position="117"/>
    </location>
</feature>
<feature type="sequence variant" id="VAR_016976" description="In dbSNP:rs2057413." evidence="7 8 9">
    <original>V</original>
    <variation>M</variation>
    <location>
        <position position="473"/>
    </location>
</feature>
<feature type="helix" evidence="15">
    <location>
        <begin position="8"/>
        <end position="17"/>
    </location>
</feature>
<feature type="helix" evidence="15">
    <location>
        <begin position="21"/>
        <end position="40"/>
    </location>
</feature>
<feature type="helix" evidence="15">
    <location>
        <begin position="46"/>
        <end position="60"/>
    </location>
</feature>
<feature type="turn" evidence="15">
    <location>
        <begin position="61"/>
        <end position="63"/>
    </location>
</feature>
<feature type="helix" evidence="16">
    <location>
        <begin position="149"/>
        <end position="151"/>
    </location>
</feature>
<feature type="helix" evidence="16">
    <location>
        <begin position="164"/>
        <end position="166"/>
    </location>
</feature>
<feature type="helix" evidence="16">
    <location>
        <begin position="167"/>
        <end position="170"/>
    </location>
</feature>
<feature type="strand" evidence="16">
    <location>
        <begin position="174"/>
        <end position="180"/>
    </location>
</feature>
<feature type="strand" evidence="16">
    <location>
        <begin position="182"/>
        <end position="184"/>
    </location>
</feature>
<feature type="strand" evidence="16">
    <location>
        <begin position="187"/>
        <end position="192"/>
    </location>
</feature>
<feature type="helix" evidence="16">
    <location>
        <begin position="202"/>
        <end position="211"/>
    </location>
</feature>
<feature type="helix" evidence="16">
    <location>
        <begin position="219"/>
        <end position="221"/>
    </location>
</feature>
<feature type="turn" evidence="16">
    <location>
        <begin position="230"/>
        <end position="232"/>
    </location>
</feature>
<protein>
    <recommendedName>
        <fullName>Histone-lysine N-methyltransferase SETDB2</fullName>
        <ecNumber evidence="14">2.1.1.366</ecNumber>
    </recommendedName>
    <alternativeName>
        <fullName>Chronic lymphocytic leukemia deletion region gene 8 protein</fullName>
    </alternativeName>
    <alternativeName>
        <fullName>Lysine N-methyltransferase 1F</fullName>
    </alternativeName>
    <alternativeName>
        <fullName>SET domain bifurcated 2</fullName>
    </alternativeName>
</protein>
<reference key="1">
    <citation type="journal article" date="2001" name="Cancer Res.">
        <title>Cloning and characterization of CLLD6, CLLD7, and CLLD8, novel candidate genes for leukemogenesis at chromosome 13q14, a region commonly deleted in B-cell chronic lymphocytic leukemia.</title>
        <authorList>
            <person name="Mabuchi H."/>
            <person name="Fujii H."/>
            <person name="Calin G."/>
            <person name="Alder H."/>
            <person name="Negrini M."/>
            <person name="Rassenti L."/>
            <person name="Kipps T.J."/>
            <person name="Bullrich F."/>
            <person name="Croce C.M."/>
        </authorList>
    </citation>
    <scope>NUCLEOTIDE SEQUENCE [MRNA] (ISOFORM 1)</scope>
    <scope>VARIANT GLY-117</scope>
</reference>
<reference key="2">
    <citation type="journal article" date="2004" name="Nature">
        <title>The DNA sequence and analysis of human chromosome 13.</title>
        <authorList>
            <person name="Dunham A."/>
            <person name="Matthews L.H."/>
            <person name="Burton J."/>
            <person name="Ashurst J.L."/>
            <person name="Howe K.L."/>
            <person name="Ashcroft K.J."/>
            <person name="Beare D.M."/>
            <person name="Burford D.C."/>
            <person name="Hunt S.E."/>
            <person name="Griffiths-Jones S."/>
            <person name="Jones M.C."/>
            <person name="Keenan S.J."/>
            <person name="Oliver K."/>
            <person name="Scott C.E."/>
            <person name="Ainscough R."/>
            <person name="Almeida J.P."/>
            <person name="Ambrose K.D."/>
            <person name="Andrews D.T."/>
            <person name="Ashwell R.I.S."/>
            <person name="Babbage A.K."/>
            <person name="Bagguley C.L."/>
            <person name="Bailey J."/>
            <person name="Bannerjee R."/>
            <person name="Barlow K.F."/>
            <person name="Bates K."/>
            <person name="Beasley H."/>
            <person name="Bird C.P."/>
            <person name="Bray-Allen S."/>
            <person name="Brown A.J."/>
            <person name="Brown J.Y."/>
            <person name="Burrill W."/>
            <person name="Carder C."/>
            <person name="Carter N.P."/>
            <person name="Chapman J.C."/>
            <person name="Clamp M.E."/>
            <person name="Clark S.Y."/>
            <person name="Clarke G."/>
            <person name="Clee C.M."/>
            <person name="Clegg S.C."/>
            <person name="Cobley V."/>
            <person name="Collins J.E."/>
            <person name="Corby N."/>
            <person name="Coville G.J."/>
            <person name="Deloukas P."/>
            <person name="Dhami P."/>
            <person name="Dunham I."/>
            <person name="Dunn M."/>
            <person name="Earthrowl M.E."/>
            <person name="Ellington A.G."/>
            <person name="Faulkner L."/>
            <person name="Frankish A.G."/>
            <person name="Frankland J."/>
            <person name="French L."/>
            <person name="Garner P."/>
            <person name="Garnett J."/>
            <person name="Gilbert J.G.R."/>
            <person name="Gilson C.J."/>
            <person name="Ghori J."/>
            <person name="Grafham D.V."/>
            <person name="Gribble S.M."/>
            <person name="Griffiths C."/>
            <person name="Hall R.E."/>
            <person name="Hammond S."/>
            <person name="Harley J.L."/>
            <person name="Hart E.A."/>
            <person name="Heath P.D."/>
            <person name="Howden P.J."/>
            <person name="Huckle E.J."/>
            <person name="Hunt P.J."/>
            <person name="Hunt A.R."/>
            <person name="Johnson C."/>
            <person name="Johnson D."/>
            <person name="Kay M."/>
            <person name="Kimberley A.M."/>
            <person name="King A."/>
            <person name="Laird G.K."/>
            <person name="Langford C.J."/>
            <person name="Lawlor S."/>
            <person name="Leongamornlert D.A."/>
            <person name="Lloyd D.M."/>
            <person name="Lloyd C."/>
            <person name="Loveland J.E."/>
            <person name="Lovell J."/>
            <person name="Martin S."/>
            <person name="Mashreghi-Mohammadi M."/>
            <person name="McLaren S.J."/>
            <person name="McMurray A."/>
            <person name="Milne S."/>
            <person name="Moore M.J.F."/>
            <person name="Nickerson T."/>
            <person name="Palmer S.A."/>
            <person name="Pearce A.V."/>
            <person name="Peck A.I."/>
            <person name="Pelan S."/>
            <person name="Phillimore B."/>
            <person name="Porter K.M."/>
            <person name="Rice C.M."/>
            <person name="Searle S."/>
            <person name="Sehra H.K."/>
            <person name="Shownkeen R."/>
            <person name="Skuce C.D."/>
            <person name="Smith M."/>
            <person name="Steward C.A."/>
            <person name="Sycamore N."/>
            <person name="Tester J."/>
            <person name="Thomas D.W."/>
            <person name="Tracey A."/>
            <person name="Tromans A."/>
            <person name="Tubby B."/>
            <person name="Wall M."/>
            <person name="Wallis J.M."/>
            <person name="West A.P."/>
            <person name="Whitehead S.L."/>
            <person name="Willey D.L."/>
            <person name="Wilming L."/>
            <person name="Wray P.W."/>
            <person name="Wright M.W."/>
            <person name="Young L."/>
            <person name="Coulson A."/>
            <person name="Durbin R.M."/>
            <person name="Hubbard T."/>
            <person name="Sulston J.E."/>
            <person name="Beck S."/>
            <person name="Bentley D.R."/>
            <person name="Rogers J."/>
            <person name="Ross M.T."/>
        </authorList>
    </citation>
    <scope>NUCLEOTIDE SEQUENCE [LARGE SCALE GENOMIC DNA]</scope>
</reference>
<reference key="3">
    <citation type="journal article" date="2004" name="Genome Res.">
        <title>The status, quality, and expansion of the NIH full-length cDNA project: the Mammalian Gene Collection (MGC).</title>
        <authorList>
            <consortium name="The MGC Project Team"/>
        </authorList>
    </citation>
    <scope>NUCLEOTIDE SEQUENCE [LARGE SCALE MRNA] (ISOFORM 2)</scope>
    <scope>VARIANT MET-473</scope>
    <source>
        <tissue>Colon</tissue>
        <tissue>Testis</tissue>
    </source>
</reference>
<reference key="4">
    <citation type="journal article" date="2007" name="BMC Genomics">
        <title>The full-ORF clone resource of the German cDNA consortium.</title>
        <authorList>
            <person name="Bechtel S."/>
            <person name="Rosenfelder H."/>
            <person name="Duda A."/>
            <person name="Schmidt C.P."/>
            <person name="Ernst U."/>
            <person name="Wellenreuther R."/>
            <person name="Mehrle A."/>
            <person name="Schuster C."/>
            <person name="Bahr A."/>
            <person name="Bloecker H."/>
            <person name="Heubner D."/>
            <person name="Hoerlein A."/>
            <person name="Michel G."/>
            <person name="Wedler H."/>
            <person name="Koehrer K."/>
            <person name="Ottenwaelder B."/>
            <person name="Poustka A."/>
            <person name="Wiemann S."/>
            <person name="Schupp I."/>
        </authorList>
    </citation>
    <scope>NUCLEOTIDE SEQUENCE [LARGE SCALE MRNA] OF 332-719 (ISOFORM 3)</scope>
    <scope>VARIANT MET-473</scope>
    <source>
        <tissue>Amygdala</tissue>
    </source>
</reference>
<reference key="5">
    <citation type="journal article" date="2010" name="J. Biol. Chem.">
        <title>CLLD8/KMT1F is a lysine methyltransferase that is important for chromosome segregation.</title>
        <authorList>
            <person name="Falandry C."/>
            <person name="Fourel G."/>
            <person name="Galy V."/>
            <person name="Ristriani T."/>
            <person name="Horard B."/>
            <person name="Bensimon E."/>
            <person name="Salles G."/>
            <person name="Gilson E."/>
            <person name="Magdinier F."/>
        </authorList>
    </citation>
    <scope>FUNCTION</scope>
    <scope>CATALYTIC ACTIVITY</scope>
    <scope>SUBCELLULAR LOCATION</scope>
</reference>
<reference key="6">
    <citation type="journal article" date="2003" name="Nat. Genet.">
        <title>Positional cloning of a quantitative trait locus on chromosome 13q14 that influences immunoglobulin E levels and asthma.</title>
        <authorList>
            <person name="Zhang Y."/>
            <person name="Leaves N.I."/>
            <person name="Anderson G.G."/>
            <person name="Ponting C.P."/>
            <person name="Broxholme J."/>
            <person name="Holt R."/>
            <person name="Edser P."/>
            <person name="Bhattacharyya S."/>
            <person name="Dunham A."/>
            <person name="Adcock I.M."/>
            <person name="Pulleyn L."/>
            <person name="Barnes P.J."/>
            <person name="Harper J.I."/>
            <person name="Abecasis G."/>
            <person name="Cardon L."/>
            <person name="White M."/>
            <person name="Burton J."/>
            <person name="Matthews L."/>
            <person name="Mott R."/>
            <person name="Ross M."/>
            <person name="Cox R."/>
            <person name="Moffatt M.F."/>
            <person name="Cookson W.O.C.M."/>
        </authorList>
    </citation>
    <scope>VARIANTS GLY-117 AND MET-473</scope>
</reference>
<organism>
    <name type="scientific">Homo sapiens</name>
    <name type="common">Human</name>
    <dbReference type="NCBI Taxonomy" id="9606"/>
    <lineage>
        <taxon>Eukaryota</taxon>
        <taxon>Metazoa</taxon>
        <taxon>Chordata</taxon>
        <taxon>Craniata</taxon>
        <taxon>Vertebrata</taxon>
        <taxon>Euteleostomi</taxon>
        <taxon>Mammalia</taxon>
        <taxon>Eutheria</taxon>
        <taxon>Euarchontoglires</taxon>
        <taxon>Primates</taxon>
        <taxon>Haplorrhini</taxon>
        <taxon>Catarrhini</taxon>
        <taxon>Hominidae</taxon>
        <taxon>Homo</taxon>
    </lineage>
</organism>
<gene>
    <name type="primary">SETDB2</name>
    <name type="synonym">C13orf4</name>
    <name type="synonym">CLLD8</name>
    <name type="synonym">KMT1F</name>
</gene>
<comment type="function">
    <text evidence="10">Histone methyltransferase involved in left-right axis specification in early development and mitosis. Specifically trimethylates 'Lys-9' of histone H3 (H3K9me3). H3K9me3 is a specific tag for epigenetic transcriptional repression that recruits HP1 (CBX1, CBX3 and/or CBX5) proteins to methylated histones. Contributes to H3K9me3 in both the interspersed repetitive elements and centromere-associated repeats. Plays a role in chromosome condensation and segregation during mitosis.</text>
</comment>
<comment type="catalytic activity">
    <reaction evidence="14">
        <text>N(6),N(6)-dimethyl-L-lysyl(9)-[histone H3] + S-adenosyl-L-methionine = N(6),N(6),N(6)-trimethyl-L-lysyl(9)-[histone H3] + S-adenosyl-L-homocysteine + H(+)</text>
        <dbReference type="Rhea" id="RHEA:60288"/>
        <dbReference type="Rhea" id="RHEA-COMP:15538"/>
        <dbReference type="Rhea" id="RHEA-COMP:15541"/>
        <dbReference type="ChEBI" id="CHEBI:15378"/>
        <dbReference type="ChEBI" id="CHEBI:57856"/>
        <dbReference type="ChEBI" id="CHEBI:59789"/>
        <dbReference type="ChEBI" id="CHEBI:61961"/>
        <dbReference type="ChEBI" id="CHEBI:61976"/>
        <dbReference type="EC" id="2.1.1.366"/>
    </reaction>
</comment>
<comment type="interaction">
    <interactant intactId="EBI-1222089">
        <id>Q96T68</id>
    </interactant>
    <interactant intactId="EBI-2807994">
        <id>Q8N8R7</id>
        <label>ARL14EP</label>
    </interactant>
    <organismsDiffer>false</organismsDiffer>
    <experiments>5</experiments>
</comment>
<comment type="interaction">
    <interactant intactId="EBI-12346707">
        <id>Q96T68-2</id>
    </interactant>
    <interactant intactId="EBI-2807994">
        <id>Q8N8R7</id>
        <label>ARL14EP</label>
    </interactant>
    <organismsDiffer>false</organismsDiffer>
    <experiments>6</experiments>
</comment>
<comment type="subcellular location">
    <subcellularLocation>
        <location evidence="10">Nucleus</location>
    </subcellularLocation>
    <subcellularLocation>
        <location evidence="14">Chromosome</location>
    </subcellularLocation>
</comment>
<comment type="alternative products">
    <event type="alternative splicing"/>
    <isoform>
        <id>Q96T68-1</id>
        <name>1</name>
        <sequence type="displayed"/>
    </isoform>
    <isoform>
        <id>Q96T68-2</id>
        <name>2</name>
        <sequence type="described" ref="VSP_008413"/>
    </isoform>
    <isoform>
        <id>Q96T68-3</id>
        <name>3</name>
        <sequence type="described" ref="VSP_024034"/>
    </isoform>
</comment>
<comment type="tissue specificity">
    <text>Ubiquitous. Highest expression in heart, testis and ovary.</text>
</comment>
<comment type="domain">
    <text evidence="1">In the pre-SET domain, Cys residues bind 3 zinc ions that are arranged in a triangular cluster; some of these Cys residues contribute to the binding of two zinc ions within the cluster.</text>
</comment>
<comment type="similarity">
    <text evidence="3">Belongs to the class V-like SAM-binding methyltransferase superfamily.</text>
</comment>
<comment type="sequence caution" evidence="13">
    <conflict type="miscellaneous discrepancy">
        <sequence resource="EMBL-CDS" id="CAH56265"/>
    </conflict>
    <text>Contaminating sequence. Potential poly-A sequence.</text>
</comment>
<evidence type="ECO:0000250" key="1"/>
<evidence type="ECO:0000255" key="2">
    <source>
        <dbReference type="PROSITE-ProRule" id="PRU00157"/>
    </source>
</evidence>
<evidence type="ECO:0000255" key="3">
    <source>
        <dbReference type="PROSITE-ProRule" id="PRU00190"/>
    </source>
</evidence>
<evidence type="ECO:0000255" key="4">
    <source>
        <dbReference type="PROSITE-ProRule" id="PRU00338"/>
    </source>
</evidence>
<evidence type="ECO:0000256" key="5">
    <source>
        <dbReference type="SAM" id="MobiDB-lite"/>
    </source>
</evidence>
<evidence type="ECO:0000269" key="6">
    <source>
    </source>
</evidence>
<evidence type="ECO:0000269" key="7">
    <source>
    </source>
</evidence>
<evidence type="ECO:0000269" key="8">
    <source>
    </source>
</evidence>
<evidence type="ECO:0000269" key="9">
    <source>
    </source>
</evidence>
<evidence type="ECO:0000269" key="10">
    <source>
    </source>
</evidence>
<evidence type="ECO:0000303" key="11">
    <source>
    </source>
</evidence>
<evidence type="ECO:0000303" key="12">
    <source>
    </source>
</evidence>
<evidence type="ECO:0000305" key="13"/>
<evidence type="ECO:0000305" key="14">
    <source>
    </source>
</evidence>
<evidence type="ECO:0007829" key="15">
    <source>
        <dbReference type="PDB" id="5TFP"/>
    </source>
</evidence>
<evidence type="ECO:0007829" key="16">
    <source>
        <dbReference type="PDB" id="8HFP"/>
    </source>
</evidence>
<sequence length="719" mass="81894">MGEKNGDAKTFWMELEDDGKVDFIFEQVQNVLQSLKQKIKDGSATNKEYIQAMILVNEATIINSSTSIKGASQKEVNAQSSDPMPVTQKEQENKSNAFPSTSCENSFPEDCTFLTTENKEILSLEDKVVDFREKDSSSNLSYQSHDCSGACLMKMPLNLKGENPLQLPIKCHFQRRHAKTNSHSSALHVSYKTPCGRSLRNVEEVFRYLLETECNFLFTDNFSFNTYVQLARNYPKQKEVVSDVDISNGVESVPISFCNEIDSRKLPQFKYRKTVWPRAYNLTNFSSMFTDSCDCSEGCIDITKCACLQLTARNAKTSPLSSDKITTGYKYKRLQRQIPTGIYECSLLCKCNRQLCQNRVVQHGPQVRLQVFKTEQKGWGVRCLDDIDRGTFVCIYSGRLLSRANTEKSYGIDENGRDENTMKNIFSKKRKLEVACSDCEVEVLPLGLETHPRTAKTEKCPPKFSNNPKELTVETKYDNISRIQYHSVIRDPESKTAIFQHNGKKMEFVSSESVTPEDNDGFKPPREHLNSKTKGAQKDSSSNHVDEFEDNLLIESDVIDITKYREETPPRSRCNQATTLDNQNIKKAIEVQIQKPQEGRSTACQRQQVFCDEELLSETKNTSSDSLTKFNKGNVFLLDATKEGNVGRFLNHSCCPNLLVQNVFVETHNRNFPLVAFFTNRYVKARTELTWDYGYEAGTVPEKEIFCQCGVNKCRKKIL</sequence>
<proteinExistence type="evidence at protein level"/>
<keyword id="KW-0002">3D-structure</keyword>
<keyword id="KW-0025">Alternative splicing</keyword>
<keyword id="KW-0131">Cell cycle</keyword>
<keyword id="KW-0132">Cell division</keyword>
<keyword id="KW-0156">Chromatin regulator</keyword>
<keyword id="KW-0158">Chromosome</keyword>
<keyword id="KW-0217">Developmental protein</keyword>
<keyword id="KW-0479">Metal-binding</keyword>
<keyword id="KW-0489">Methyltransferase</keyword>
<keyword id="KW-0498">Mitosis</keyword>
<keyword id="KW-0539">Nucleus</keyword>
<keyword id="KW-1267">Proteomics identification</keyword>
<keyword id="KW-1185">Reference proteome</keyword>
<keyword id="KW-0949">S-adenosyl-L-methionine</keyword>
<keyword id="KW-0808">Transferase</keyword>
<keyword id="KW-0862">Zinc</keyword>
<dbReference type="EC" id="2.1.1.366" evidence="14"/>
<dbReference type="EMBL" id="AF334407">
    <property type="protein sequence ID" value="AAK38373.1"/>
    <property type="molecule type" value="mRNA"/>
</dbReference>
<dbReference type="EMBL" id="AL136218">
    <property type="status" value="NOT_ANNOTATED_CDS"/>
    <property type="molecule type" value="Genomic_DNA"/>
</dbReference>
<dbReference type="EMBL" id="AL139321">
    <property type="status" value="NOT_ANNOTATED_CDS"/>
    <property type="molecule type" value="Genomic_DNA"/>
</dbReference>
<dbReference type="EMBL" id="BC017078">
    <property type="protein sequence ID" value="AAH17078.1"/>
    <property type="molecule type" value="mRNA"/>
</dbReference>
<dbReference type="EMBL" id="BC047434">
    <property type="protein sequence ID" value="AAH47434.1"/>
    <property type="molecule type" value="mRNA"/>
</dbReference>
<dbReference type="EMBL" id="AL831937">
    <property type="protein sequence ID" value="CAH56265.1"/>
    <property type="status" value="ALT_SEQ"/>
    <property type="molecule type" value="mRNA"/>
</dbReference>
<dbReference type="CCDS" id="CCDS53868.1">
    <molecule id="Q96T68-2"/>
</dbReference>
<dbReference type="CCDS" id="CCDS9417.1">
    <molecule id="Q96T68-1"/>
</dbReference>
<dbReference type="RefSeq" id="NP_001153780.1">
    <molecule id="Q96T68-2"/>
    <property type="nucleotide sequence ID" value="NM_001160308.3"/>
</dbReference>
<dbReference type="RefSeq" id="NP_114121.2">
    <molecule id="Q96T68-1"/>
    <property type="nucleotide sequence ID" value="NM_031915.3"/>
</dbReference>
<dbReference type="PDB" id="5TFP">
    <property type="method" value="X-ray"/>
    <property type="resolution" value="2.00 A"/>
    <property type="chains" value="A/B=1-64"/>
</dbReference>
<dbReference type="PDB" id="8HFP">
    <property type="method" value="X-ray"/>
    <property type="resolution" value="1.82 A"/>
    <property type="chains" value="C/D=133-239"/>
</dbReference>
<dbReference type="PDBsum" id="5TFP"/>
<dbReference type="PDBsum" id="8HFP"/>
<dbReference type="SMR" id="Q96T68"/>
<dbReference type="BioGRID" id="123768">
    <property type="interactions" value="18"/>
</dbReference>
<dbReference type="FunCoup" id="Q96T68">
    <property type="interactions" value="2281"/>
</dbReference>
<dbReference type="IntAct" id="Q96T68">
    <property type="interactions" value="14"/>
</dbReference>
<dbReference type="STRING" id="9606.ENSP00000346175"/>
<dbReference type="GlyGen" id="Q96T68">
    <property type="glycosylation" value="1 site, 1 O-linked glycan (1 site)"/>
</dbReference>
<dbReference type="iPTMnet" id="Q96T68"/>
<dbReference type="PhosphoSitePlus" id="Q96T68"/>
<dbReference type="BioMuta" id="SETDB2"/>
<dbReference type="DMDM" id="143811459"/>
<dbReference type="jPOST" id="Q96T68"/>
<dbReference type="MassIVE" id="Q96T68"/>
<dbReference type="PaxDb" id="9606-ENSP00000346175"/>
<dbReference type="PeptideAtlas" id="Q96T68"/>
<dbReference type="ProteomicsDB" id="78203">
    <molecule id="Q96T68-1"/>
</dbReference>
<dbReference type="ProteomicsDB" id="78204">
    <molecule id="Q96T68-2"/>
</dbReference>
<dbReference type="ProteomicsDB" id="78205">
    <molecule id="Q96T68-3"/>
</dbReference>
<dbReference type="Antibodypedia" id="23922">
    <property type="antibodies" value="239 antibodies from 35 providers"/>
</dbReference>
<dbReference type="DNASU" id="83852"/>
<dbReference type="Ensembl" id="ENST00000317257.12">
    <molecule id="Q96T68-2"/>
    <property type="protein sequence ID" value="ENSP00000326477.9"/>
    <property type="gene ID" value="ENSG00000136169.17"/>
</dbReference>
<dbReference type="Ensembl" id="ENST00000354234.8">
    <molecule id="Q96T68-1"/>
    <property type="protein sequence ID" value="ENSP00000346175.5"/>
    <property type="gene ID" value="ENSG00000136169.17"/>
</dbReference>
<dbReference type="Ensembl" id="ENST00000611815.2">
    <molecule id="Q96T68-2"/>
    <property type="protein sequence ID" value="ENSP00000482240.2"/>
    <property type="gene ID" value="ENSG00000136169.17"/>
</dbReference>
<dbReference type="GeneID" id="83852"/>
<dbReference type="KEGG" id="hsa:83852"/>
<dbReference type="MANE-Select" id="ENST00000611815.2">
    <molecule id="Q96T68-2"/>
    <property type="protein sequence ID" value="ENSP00000482240.2"/>
    <property type="RefSeq nucleotide sequence ID" value="NM_001160308.3"/>
    <property type="RefSeq protein sequence ID" value="NP_001153780.1"/>
</dbReference>
<dbReference type="UCSC" id="uc001vcz.4">
    <molecule id="Q96T68-1"/>
    <property type="organism name" value="human"/>
</dbReference>
<dbReference type="AGR" id="HGNC:20263"/>
<dbReference type="CTD" id="83852"/>
<dbReference type="DisGeNET" id="83852"/>
<dbReference type="GeneCards" id="SETDB2"/>
<dbReference type="HGNC" id="HGNC:20263">
    <property type="gene designation" value="SETDB2"/>
</dbReference>
<dbReference type="HPA" id="ENSG00000136169">
    <property type="expression patterns" value="Low tissue specificity"/>
</dbReference>
<dbReference type="MalaCards" id="SETDB2"/>
<dbReference type="MIM" id="607865">
    <property type="type" value="gene"/>
</dbReference>
<dbReference type="neXtProt" id="NX_Q96T68"/>
<dbReference type="OpenTargets" id="ENSG00000136169"/>
<dbReference type="PharmGKB" id="PA134956285"/>
<dbReference type="VEuPathDB" id="HostDB:ENSG00000136169"/>
<dbReference type="eggNOG" id="KOG1141">
    <property type="taxonomic scope" value="Eukaryota"/>
</dbReference>
<dbReference type="GeneTree" id="ENSGT00940000158209"/>
<dbReference type="HOGENOM" id="CLU_003279_2_0_1"/>
<dbReference type="InParanoid" id="Q96T68"/>
<dbReference type="OMA" id="IKGMYIS"/>
<dbReference type="OrthoDB" id="9473158at2759"/>
<dbReference type="PAN-GO" id="Q96T68">
    <property type="GO annotations" value="6 GO annotations based on evolutionary models"/>
</dbReference>
<dbReference type="PhylomeDB" id="Q96T68"/>
<dbReference type="TreeFam" id="TF106411"/>
<dbReference type="BioCyc" id="MetaCyc:HS06128-MONOMER"/>
<dbReference type="PathwayCommons" id="Q96T68"/>
<dbReference type="Reactome" id="R-HSA-3214841">
    <property type="pathway name" value="PKMTs methylate histone lysines"/>
</dbReference>
<dbReference type="SignaLink" id="Q96T68"/>
<dbReference type="SIGNOR" id="Q96T68"/>
<dbReference type="BioGRID-ORCS" id="83852">
    <property type="hits" value="22 hits in 1194 CRISPR screens"/>
</dbReference>
<dbReference type="GenomeRNAi" id="83852"/>
<dbReference type="Pharos" id="Q96T68">
    <property type="development level" value="Tbio"/>
</dbReference>
<dbReference type="PRO" id="PR:Q96T68"/>
<dbReference type="Proteomes" id="UP000005640">
    <property type="component" value="Chromosome 13"/>
</dbReference>
<dbReference type="RNAct" id="Q96T68">
    <property type="molecule type" value="protein"/>
</dbReference>
<dbReference type="Bgee" id="ENSG00000136169">
    <property type="expression patterns" value="Expressed in sperm and 182 other cell types or tissues"/>
</dbReference>
<dbReference type="ExpressionAtlas" id="Q96T68">
    <property type="expression patterns" value="baseline and differential"/>
</dbReference>
<dbReference type="GO" id="GO:0005694">
    <property type="term" value="C:chromosome"/>
    <property type="evidence" value="ECO:0007669"/>
    <property type="project" value="UniProtKB-SubCell"/>
</dbReference>
<dbReference type="GO" id="GO:0005829">
    <property type="term" value="C:cytosol"/>
    <property type="evidence" value="ECO:0000314"/>
    <property type="project" value="HPA"/>
</dbReference>
<dbReference type="GO" id="GO:0005654">
    <property type="term" value="C:nucleoplasm"/>
    <property type="evidence" value="ECO:0000314"/>
    <property type="project" value="HPA"/>
</dbReference>
<dbReference type="GO" id="GO:0005634">
    <property type="term" value="C:nucleus"/>
    <property type="evidence" value="ECO:0000314"/>
    <property type="project" value="UniProtKB"/>
</dbReference>
<dbReference type="GO" id="GO:0003677">
    <property type="term" value="F:DNA binding"/>
    <property type="evidence" value="ECO:0007669"/>
    <property type="project" value="InterPro"/>
</dbReference>
<dbReference type="GO" id="GO:0140938">
    <property type="term" value="F:histone H3 methyltransferase activity"/>
    <property type="evidence" value="ECO:0000304"/>
    <property type="project" value="Reactome"/>
</dbReference>
<dbReference type="GO" id="GO:0046974">
    <property type="term" value="F:histone H3K9 methyltransferase activity"/>
    <property type="evidence" value="ECO:0000314"/>
    <property type="project" value="UniProtKB"/>
</dbReference>
<dbReference type="GO" id="GO:0140948">
    <property type="term" value="F:histone H3K9 monomethyltransferase activity"/>
    <property type="evidence" value="ECO:0007669"/>
    <property type="project" value="RHEA"/>
</dbReference>
<dbReference type="GO" id="GO:0008270">
    <property type="term" value="F:zinc ion binding"/>
    <property type="evidence" value="ECO:0007669"/>
    <property type="project" value="InterPro"/>
</dbReference>
<dbReference type="GO" id="GO:0051301">
    <property type="term" value="P:cell division"/>
    <property type="evidence" value="ECO:0007669"/>
    <property type="project" value="UniProtKB-KW"/>
</dbReference>
<dbReference type="GO" id="GO:0007059">
    <property type="term" value="P:chromosome segregation"/>
    <property type="evidence" value="ECO:0000315"/>
    <property type="project" value="UniProtKB"/>
</dbReference>
<dbReference type="GO" id="GO:0001947">
    <property type="term" value="P:heart looping"/>
    <property type="evidence" value="ECO:0000250"/>
    <property type="project" value="UniProtKB"/>
</dbReference>
<dbReference type="GO" id="GO:0070828">
    <property type="term" value="P:heterochromatin organization"/>
    <property type="evidence" value="ECO:0000318"/>
    <property type="project" value="GO_Central"/>
</dbReference>
<dbReference type="GO" id="GO:0070986">
    <property type="term" value="P:left/right axis specification"/>
    <property type="evidence" value="ECO:0000250"/>
    <property type="project" value="UniProtKB"/>
</dbReference>
<dbReference type="GO" id="GO:0032259">
    <property type="term" value="P:methylation"/>
    <property type="evidence" value="ECO:0007669"/>
    <property type="project" value="UniProtKB-KW"/>
</dbReference>
<dbReference type="GO" id="GO:0000278">
    <property type="term" value="P:mitotic cell cycle"/>
    <property type="evidence" value="ECO:0000315"/>
    <property type="project" value="UniProtKB"/>
</dbReference>
<dbReference type="GO" id="GO:0045892">
    <property type="term" value="P:negative regulation of DNA-templated transcription"/>
    <property type="evidence" value="ECO:0000250"/>
    <property type="project" value="UniProtKB"/>
</dbReference>
<dbReference type="GO" id="GO:0010629">
    <property type="term" value="P:negative regulation of gene expression"/>
    <property type="evidence" value="ECO:0000318"/>
    <property type="project" value="GO_Central"/>
</dbReference>
<dbReference type="CDD" id="cd01395">
    <property type="entry name" value="HMT_MBD"/>
    <property type="match status" value="1"/>
</dbReference>
<dbReference type="CDD" id="cd10523">
    <property type="entry name" value="SET_SETDB2"/>
    <property type="match status" value="1"/>
</dbReference>
<dbReference type="FunFam" id="2.170.270.10:FF:000017">
    <property type="entry name" value="Histone-lysine N-methyltransferase"/>
    <property type="match status" value="1"/>
</dbReference>
<dbReference type="FunFam" id="2.170.270.10:FF:000029">
    <property type="entry name" value="Histone-lysine N-methyltransferase SETDB2"/>
    <property type="match status" value="1"/>
</dbReference>
<dbReference type="Gene3D" id="3.30.890.10">
    <property type="entry name" value="Methyl-cpg-binding Protein 2, Chain A"/>
    <property type="match status" value="1"/>
</dbReference>
<dbReference type="Gene3D" id="2.170.270.10">
    <property type="entry name" value="SET domain"/>
    <property type="match status" value="2"/>
</dbReference>
<dbReference type="InterPro" id="IPR016177">
    <property type="entry name" value="DNA-bd_dom_sf"/>
</dbReference>
<dbReference type="InterPro" id="IPR001739">
    <property type="entry name" value="Methyl_CpG_DNA-bd"/>
</dbReference>
<dbReference type="InterPro" id="IPR007728">
    <property type="entry name" value="Pre-SET_dom"/>
</dbReference>
<dbReference type="InterPro" id="IPR001214">
    <property type="entry name" value="SET_dom"/>
</dbReference>
<dbReference type="InterPro" id="IPR046341">
    <property type="entry name" value="SET_dom_sf"/>
</dbReference>
<dbReference type="InterPro" id="IPR047232">
    <property type="entry name" value="SETDB1/2-like_MBD"/>
</dbReference>
<dbReference type="InterPro" id="IPR051516">
    <property type="entry name" value="SETDB_methyltransferase"/>
</dbReference>
<dbReference type="PANTHER" id="PTHR46024">
    <property type="entry name" value="HISTONE-LYSINE N-METHYLTRANSFERASE EGGLESS"/>
    <property type="match status" value="1"/>
</dbReference>
<dbReference type="PANTHER" id="PTHR46024:SF3">
    <property type="entry name" value="HISTONE-LYSINE N-METHYLTRANSFERASE SETDB2"/>
    <property type="match status" value="1"/>
</dbReference>
<dbReference type="Pfam" id="PF01429">
    <property type="entry name" value="MBD"/>
    <property type="match status" value="1"/>
</dbReference>
<dbReference type="Pfam" id="PF05033">
    <property type="entry name" value="Pre-SET"/>
    <property type="match status" value="1"/>
</dbReference>
<dbReference type="Pfam" id="PF00856">
    <property type="entry name" value="SET"/>
    <property type="match status" value="2"/>
</dbReference>
<dbReference type="SMART" id="SM00391">
    <property type="entry name" value="MBD"/>
    <property type="match status" value="1"/>
</dbReference>
<dbReference type="SMART" id="SM00468">
    <property type="entry name" value="PreSET"/>
    <property type="match status" value="1"/>
</dbReference>
<dbReference type="SMART" id="SM00317">
    <property type="entry name" value="SET"/>
    <property type="match status" value="1"/>
</dbReference>
<dbReference type="SUPFAM" id="SSF54171">
    <property type="entry name" value="DNA-binding domain"/>
    <property type="match status" value="1"/>
</dbReference>
<dbReference type="SUPFAM" id="SSF82199">
    <property type="entry name" value="SET domain"/>
    <property type="match status" value="1"/>
</dbReference>
<dbReference type="PROSITE" id="PS50982">
    <property type="entry name" value="MBD"/>
    <property type="match status" value="1"/>
</dbReference>
<dbReference type="PROSITE" id="PS50867">
    <property type="entry name" value="PRE_SET"/>
    <property type="match status" value="1"/>
</dbReference>
<dbReference type="PROSITE" id="PS50280">
    <property type="entry name" value="SET"/>
    <property type="match status" value="1"/>
</dbReference>
<accession>Q96T68</accession>
<accession>Q5TC65</accession>
<accession>Q5TC66</accession>
<accession>Q5W0A7</accession>
<accession>Q659A7</accession>
<accession>Q86UD6</accession>
<accession>Q96AI6</accession>